<accession>C5D7P3</accession>
<dbReference type="EC" id="2.4.2.17" evidence="1"/>
<dbReference type="EMBL" id="CP001638">
    <property type="protein sequence ID" value="ACS25653.1"/>
    <property type="molecule type" value="Genomic_DNA"/>
</dbReference>
<dbReference type="SMR" id="C5D7P3"/>
<dbReference type="STRING" id="471223.GWCH70_2980"/>
<dbReference type="KEGG" id="gwc:GWCH70_2980"/>
<dbReference type="eggNOG" id="COG0040">
    <property type="taxonomic scope" value="Bacteria"/>
</dbReference>
<dbReference type="HOGENOM" id="CLU_038115_2_0_9"/>
<dbReference type="OrthoDB" id="9801867at2"/>
<dbReference type="UniPathway" id="UPA00031">
    <property type="reaction ID" value="UER00006"/>
</dbReference>
<dbReference type="GO" id="GO:0005737">
    <property type="term" value="C:cytoplasm"/>
    <property type="evidence" value="ECO:0007669"/>
    <property type="project" value="UniProtKB-SubCell"/>
</dbReference>
<dbReference type="GO" id="GO:0005524">
    <property type="term" value="F:ATP binding"/>
    <property type="evidence" value="ECO:0007669"/>
    <property type="project" value="UniProtKB-KW"/>
</dbReference>
<dbReference type="GO" id="GO:0003879">
    <property type="term" value="F:ATP phosphoribosyltransferase activity"/>
    <property type="evidence" value="ECO:0007669"/>
    <property type="project" value="UniProtKB-UniRule"/>
</dbReference>
<dbReference type="GO" id="GO:0000105">
    <property type="term" value="P:L-histidine biosynthetic process"/>
    <property type="evidence" value="ECO:0007669"/>
    <property type="project" value="UniProtKB-UniRule"/>
</dbReference>
<dbReference type="CDD" id="cd13595">
    <property type="entry name" value="PBP2_HisGs"/>
    <property type="match status" value="1"/>
</dbReference>
<dbReference type="FunFam" id="3.40.190.10:FF:000008">
    <property type="entry name" value="ATP phosphoribosyltransferase"/>
    <property type="match status" value="1"/>
</dbReference>
<dbReference type="FunFam" id="3.40.190.10:FF:000011">
    <property type="entry name" value="ATP phosphoribosyltransferase"/>
    <property type="match status" value="1"/>
</dbReference>
<dbReference type="Gene3D" id="3.40.190.10">
    <property type="entry name" value="Periplasmic binding protein-like II"/>
    <property type="match status" value="2"/>
</dbReference>
<dbReference type="HAMAP" id="MF_01018">
    <property type="entry name" value="HisG_Short"/>
    <property type="match status" value="1"/>
</dbReference>
<dbReference type="InterPro" id="IPR013820">
    <property type="entry name" value="ATP_PRibTrfase_cat"/>
</dbReference>
<dbReference type="InterPro" id="IPR018198">
    <property type="entry name" value="ATP_PRibTrfase_CS"/>
</dbReference>
<dbReference type="InterPro" id="IPR001348">
    <property type="entry name" value="ATP_PRibTrfase_HisG"/>
</dbReference>
<dbReference type="InterPro" id="IPR024893">
    <property type="entry name" value="ATP_PRibTrfase_HisG_short"/>
</dbReference>
<dbReference type="NCBIfam" id="TIGR00070">
    <property type="entry name" value="hisG"/>
    <property type="match status" value="1"/>
</dbReference>
<dbReference type="PANTHER" id="PTHR21403:SF8">
    <property type="entry name" value="ATP PHOSPHORIBOSYLTRANSFERASE"/>
    <property type="match status" value="1"/>
</dbReference>
<dbReference type="PANTHER" id="PTHR21403">
    <property type="entry name" value="ATP PHOSPHORIBOSYLTRANSFERASE ATP-PRTASE"/>
    <property type="match status" value="1"/>
</dbReference>
<dbReference type="Pfam" id="PF01634">
    <property type="entry name" value="HisG"/>
    <property type="match status" value="1"/>
</dbReference>
<dbReference type="SUPFAM" id="SSF53850">
    <property type="entry name" value="Periplasmic binding protein-like II"/>
    <property type="match status" value="1"/>
</dbReference>
<dbReference type="PROSITE" id="PS01316">
    <property type="entry name" value="ATP_P_PHORIBOSYLTR"/>
    <property type="match status" value="1"/>
</dbReference>
<reference key="1">
    <citation type="submission" date="2009-06" db="EMBL/GenBank/DDBJ databases">
        <title>Complete sequence of chromosome of Geopacillus sp. WCH70.</title>
        <authorList>
            <consortium name="US DOE Joint Genome Institute"/>
            <person name="Lucas S."/>
            <person name="Copeland A."/>
            <person name="Lapidus A."/>
            <person name="Glavina del Rio T."/>
            <person name="Dalin E."/>
            <person name="Tice H."/>
            <person name="Bruce D."/>
            <person name="Goodwin L."/>
            <person name="Pitluck S."/>
            <person name="Chertkov O."/>
            <person name="Brettin T."/>
            <person name="Detter J.C."/>
            <person name="Han C."/>
            <person name="Larimer F."/>
            <person name="Land M."/>
            <person name="Hauser L."/>
            <person name="Kyrpides N."/>
            <person name="Mikhailova N."/>
            <person name="Brumm P."/>
            <person name="Mead D.A."/>
            <person name="Richardson P."/>
        </authorList>
    </citation>
    <scope>NUCLEOTIDE SEQUENCE [LARGE SCALE GENOMIC DNA]</scope>
    <source>
        <strain>WCH70</strain>
    </source>
</reference>
<evidence type="ECO:0000255" key="1">
    <source>
        <dbReference type="HAMAP-Rule" id="MF_01018"/>
    </source>
</evidence>
<proteinExistence type="inferred from homology"/>
<feature type="chain" id="PRO_1000213269" description="ATP phosphoribosyltransferase">
    <location>
        <begin position="1"/>
        <end position="206"/>
    </location>
</feature>
<organism>
    <name type="scientific">Geobacillus sp. (strain WCH70)</name>
    <dbReference type="NCBI Taxonomy" id="471223"/>
    <lineage>
        <taxon>Bacteria</taxon>
        <taxon>Bacillati</taxon>
        <taxon>Bacillota</taxon>
        <taxon>Bacilli</taxon>
        <taxon>Bacillales</taxon>
        <taxon>Anoxybacillaceae</taxon>
        <taxon>Geobacillus</taxon>
    </lineage>
</organism>
<protein>
    <recommendedName>
        <fullName evidence="1">ATP phosphoribosyltransferase</fullName>
        <shortName evidence="1">ATP-PRT</shortName>
        <shortName evidence="1">ATP-PRTase</shortName>
        <ecNumber evidence="1">2.4.2.17</ecNumber>
    </recommendedName>
</protein>
<comment type="function">
    <text evidence="1">Catalyzes the condensation of ATP and 5-phosphoribose 1-diphosphate to form N'-(5'-phosphoribosyl)-ATP (PR-ATP). Has a crucial role in the pathway because the rate of histidine biosynthesis seems to be controlled primarily by regulation of HisG enzymatic activity.</text>
</comment>
<comment type="catalytic activity">
    <reaction evidence="1">
        <text>1-(5-phospho-beta-D-ribosyl)-ATP + diphosphate = 5-phospho-alpha-D-ribose 1-diphosphate + ATP</text>
        <dbReference type="Rhea" id="RHEA:18473"/>
        <dbReference type="ChEBI" id="CHEBI:30616"/>
        <dbReference type="ChEBI" id="CHEBI:33019"/>
        <dbReference type="ChEBI" id="CHEBI:58017"/>
        <dbReference type="ChEBI" id="CHEBI:73183"/>
        <dbReference type="EC" id="2.4.2.17"/>
    </reaction>
</comment>
<comment type="pathway">
    <text evidence="1">Amino-acid biosynthesis; L-histidine biosynthesis; L-histidine from 5-phospho-alpha-D-ribose 1-diphosphate: step 1/9.</text>
</comment>
<comment type="subunit">
    <text evidence="1">Heteromultimer composed of HisG and HisZ subunits.</text>
</comment>
<comment type="subcellular location">
    <subcellularLocation>
        <location evidence="1">Cytoplasm</location>
    </subcellularLocation>
</comment>
<comment type="domain">
    <text>Lacks the C-terminal regulatory region which is replaced by HisZ.</text>
</comment>
<comment type="similarity">
    <text evidence="1">Belongs to the ATP phosphoribosyltransferase family. Short subfamily.</text>
</comment>
<keyword id="KW-0028">Amino-acid biosynthesis</keyword>
<keyword id="KW-0067">ATP-binding</keyword>
<keyword id="KW-0963">Cytoplasm</keyword>
<keyword id="KW-0328">Glycosyltransferase</keyword>
<keyword id="KW-0368">Histidine biosynthesis</keyword>
<keyword id="KW-0547">Nucleotide-binding</keyword>
<keyword id="KW-0808">Transferase</keyword>
<name>HIS1_GEOSW</name>
<sequence length="206" mass="23014">MLTIAMPKGRIFGEALELLRKAGYTLPPEFAESRKLMIEVPEENMRFILAKPMDVVTYVEHGVADLGIAGKDVMMEEERDVYELLDLKISKCHLAVAGLPGVRMNQIAPRVATKYPNIASSYFREQGEQVEIIRLNGSIELAPLIGLADRIVDIVSTGRTLKENGLVELEKIADVTSRLIVNPVSYRMKDEAVDELVHRLSEVIPQ</sequence>
<gene>
    <name evidence="1" type="primary">hisG</name>
    <name type="ordered locus">GWCH70_2980</name>
</gene>